<comment type="function">
    <text evidence="1">Formation of pseudouridine at positions 38, 39 and 40 in the anticodon stem and loop of transfer RNAs.</text>
</comment>
<comment type="catalytic activity">
    <reaction evidence="1">
        <text>uridine(38/39/40) in tRNA = pseudouridine(38/39/40) in tRNA</text>
        <dbReference type="Rhea" id="RHEA:22376"/>
        <dbReference type="Rhea" id="RHEA-COMP:10085"/>
        <dbReference type="Rhea" id="RHEA-COMP:10087"/>
        <dbReference type="ChEBI" id="CHEBI:65314"/>
        <dbReference type="ChEBI" id="CHEBI:65315"/>
        <dbReference type="EC" id="5.4.99.12"/>
    </reaction>
</comment>
<comment type="subunit">
    <text evidence="1">Homodimer.</text>
</comment>
<comment type="similarity">
    <text evidence="1">Belongs to the tRNA pseudouridine synthase TruA family.</text>
</comment>
<feature type="chain" id="PRO_1000017138" description="tRNA pseudouridine synthase A">
    <location>
        <begin position="1"/>
        <end position="268"/>
    </location>
</feature>
<feature type="active site" description="Nucleophile" evidence="1">
    <location>
        <position position="52"/>
    </location>
</feature>
<feature type="binding site" evidence="1">
    <location>
        <position position="110"/>
    </location>
    <ligand>
        <name>substrate</name>
    </ligand>
</feature>
<proteinExistence type="inferred from homology"/>
<evidence type="ECO:0000255" key="1">
    <source>
        <dbReference type="HAMAP-Rule" id="MF_00171"/>
    </source>
</evidence>
<reference key="1">
    <citation type="journal article" date="2007" name="PLoS Genet.">
        <title>Patterns and implications of gene gain and loss in the evolution of Prochlorococcus.</title>
        <authorList>
            <person name="Kettler G.C."/>
            <person name="Martiny A.C."/>
            <person name="Huang K."/>
            <person name="Zucker J."/>
            <person name="Coleman M.L."/>
            <person name="Rodrigue S."/>
            <person name="Chen F."/>
            <person name="Lapidus A."/>
            <person name="Ferriera S."/>
            <person name="Johnson J."/>
            <person name="Steglich C."/>
            <person name="Church G.M."/>
            <person name="Richardson P."/>
            <person name="Chisholm S.W."/>
        </authorList>
    </citation>
    <scope>NUCLEOTIDE SEQUENCE [LARGE SCALE GENOMIC DNA]</scope>
    <source>
        <strain>MIT 9515</strain>
    </source>
</reference>
<name>TRUA_PROM5</name>
<gene>
    <name evidence="1" type="primary">truA</name>
    <name type="ordered locus">P9515_17151</name>
</gene>
<keyword id="KW-0413">Isomerase</keyword>
<keyword id="KW-0819">tRNA processing</keyword>
<protein>
    <recommendedName>
        <fullName evidence="1">tRNA pseudouridine synthase A</fullName>
        <ecNumber evidence="1">5.4.99.12</ecNumber>
    </recommendedName>
    <alternativeName>
        <fullName evidence="1">tRNA pseudouridine(38-40) synthase</fullName>
    </alternativeName>
    <alternativeName>
        <fullName evidence="1">tRNA pseudouridylate synthase I</fullName>
    </alternativeName>
    <alternativeName>
        <fullName evidence="1">tRNA-uridine isomerase I</fullName>
    </alternativeName>
</protein>
<accession>A2BYR1</accession>
<organism>
    <name type="scientific">Prochlorococcus marinus (strain MIT 9515)</name>
    <dbReference type="NCBI Taxonomy" id="167542"/>
    <lineage>
        <taxon>Bacteria</taxon>
        <taxon>Bacillati</taxon>
        <taxon>Cyanobacteriota</taxon>
        <taxon>Cyanophyceae</taxon>
        <taxon>Synechococcales</taxon>
        <taxon>Prochlorococcaceae</taxon>
        <taxon>Prochlorococcus</taxon>
    </lineage>
</organism>
<dbReference type="EC" id="5.4.99.12" evidence="1"/>
<dbReference type="EMBL" id="CP000552">
    <property type="protein sequence ID" value="ABM72922.1"/>
    <property type="molecule type" value="Genomic_DNA"/>
</dbReference>
<dbReference type="RefSeq" id="WP_011821014.1">
    <property type="nucleotide sequence ID" value="NC_008817.1"/>
</dbReference>
<dbReference type="SMR" id="A2BYR1"/>
<dbReference type="STRING" id="167542.P9515_17151"/>
<dbReference type="GeneID" id="60201169"/>
<dbReference type="KEGG" id="pmc:P9515_17151"/>
<dbReference type="eggNOG" id="COG0101">
    <property type="taxonomic scope" value="Bacteria"/>
</dbReference>
<dbReference type="HOGENOM" id="CLU_014673_0_1_3"/>
<dbReference type="OrthoDB" id="9811823at2"/>
<dbReference type="Proteomes" id="UP000001589">
    <property type="component" value="Chromosome"/>
</dbReference>
<dbReference type="GO" id="GO:0003723">
    <property type="term" value="F:RNA binding"/>
    <property type="evidence" value="ECO:0007669"/>
    <property type="project" value="InterPro"/>
</dbReference>
<dbReference type="GO" id="GO:0160147">
    <property type="term" value="F:tRNA pseudouridine(38-40) synthase activity"/>
    <property type="evidence" value="ECO:0007669"/>
    <property type="project" value="UniProtKB-EC"/>
</dbReference>
<dbReference type="GO" id="GO:0031119">
    <property type="term" value="P:tRNA pseudouridine synthesis"/>
    <property type="evidence" value="ECO:0007669"/>
    <property type="project" value="UniProtKB-UniRule"/>
</dbReference>
<dbReference type="CDD" id="cd02570">
    <property type="entry name" value="PseudoU_synth_EcTruA"/>
    <property type="match status" value="1"/>
</dbReference>
<dbReference type="FunFam" id="3.30.70.580:FF:000001">
    <property type="entry name" value="tRNA pseudouridine synthase A"/>
    <property type="match status" value="1"/>
</dbReference>
<dbReference type="Gene3D" id="3.30.70.660">
    <property type="entry name" value="Pseudouridine synthase I, catalytic domain, C-terminal subdomain"/>
    <property type="match status" value="1"/>
</dbReference>
<dbReference type="Gene3D" id="3.30.70.580">
    <property type="entry name" value="Pseudouridine synthase I, catalytic domain, N-terminal subdomain"/>
    <property type="match status" value="1"/>
</dbReference>
<dbReference type="HAMAP" id="MF_00171">
    <property type="entry name" value="TruA"/>
    <property type="match status" value="1"/>
</dbReference>
<dbReference type="InterPro" id="IPR020103">
    <property type="entry name" value="PsdUridine_synth_cat_dom_sf"/>
</dbReference>
<dbReference type="InterPro" id="IPR001406">
    <property type="entry name" value="PsdUridine_synth_TruA"/>
</dbReference>
<dbReference type="InterPro" id="IPR020097">
    <property type="entry name" value="PsdUridine_synth_TruA_a/b_dom"/>
</dbReference>
<dbReference type="InterPro" id="IPR020095">
    <property type="entry name" value="PsdUridine_synth_TruA_C"/>
</dbReference>
<dbReference type="InterPro" id="IPR020094">
    <property type="entry name" value="TruA/RsuA/RluB/E/F_N"/>
</dbReference>
<dbReference type="NCBIfam" id="TIGR00071">
    <property type="entry name" value="hisT_truA"/>
    <property type="match status" value="1"/>
</dbReference>
<dbReference type="PANTHER" id="PTHR11142">
    <property type="entry name" value="PSEUDOURIDYLATE SYNTHASE"/>
    <property type="match status" value="1"/>
</dbReference>
<dbReference type="PANTHER" id="PTHR11142:SF0">
    <property type="entry name" value="TRNA PSEUDOURIDINE SYNTHASE-LIKE 1"/>
    <property type="match status" value="1"/>
</dbReference>
<dbReference type="Pfam" id="PF01416">
    <property type="entry name" value="PseudoU_synth_1"/>
    <property type="match status" value="2"/>
</dbReference>
<dbReference type="PIRSF" id="PIRSF001430">
    <property type="entry name" value="tRNA_psdUrid_synth"/>
    <property type="match status" value="1"/>
</dbReference>
<dbReference type="SUPFAM" id="SSF55120">
    <property type="entry name" value="Pseudouridine synthase"/>
    <property type="match status" value="1"/>
</dbReference>
<sequence length="268" mass="30841">MKRVALLVQYDGSYFSGWQRQKNAISVQEMIEDALFKVSNQMIKTFAAGRTDSGVHASGQVVHFDIDFVIPSDRYANVLNSRLPSTIRILESVEVKKNWHACYSAVYRHYRYVINNSKIPNLFLNKWSWHRYQKSLDEFLMSKALNGMIGEHDFYAFQKSGSTRSTSVTTIKSIEIERTEDLILIDIKATGFLYGMVRSIVGQLVLVGEKKISPEIFKDRWVGKKKQDVHESAPANGLCFVNSVYQETIFKRIDKNDLFPKFVIRGYS</sequence>